<name>ASP1_STAA8</name>
<sequence length="517" mass="61259">MKYFIPAWYDDQRWWQDTTVPYYQLQNKTEFDDMISLMGMHLENDLDYQLIVLNHAPNLRTFLHRYDLYETKYSSVFDEIQGFSHHAPQAINYHHLKWPDDVEFVYTPYLLKCVTSEQTYTNIYFSQEGYSIWFEEFERDQLQRRYIFDDRGYLSAIRYFDDQGEASYQEYLTINGDCVLHEDLKNGRVTVSKRYQHHYQQTEYNNMAQLIEEKFQAMIAQQIHEDDHVIVASDARHNRQIANHIPAKSLSYSFFKNRNETVSDEEYQSIVKNAHLIVDSVQLERDLISHQEKYQRENTMIRITPFETRQSPNISSQLMETFIGVWIDGMSDADLQQMMQRLVDYIAQEDYYRLILLSRHQNDIPMWLRECITSVNEEYQAKQNADVNVSALMTPEDQDDIIAVKTIHAEHDVVEALRTLRLVIDMSKEPDLYLQISAISAGIPQINGQQTDYVSDYDNGRIINTVDELDDALNYYLFYLKNWNYAYAYSLKLIDAYASKNIINQLDELIEGENDAT</sequence>
<organism>
    <name type="scientific">Staphylococcus aureus (strain NCTC 8325 / PS 47)</name>
    <dbReference type="NCBI Taxonomy" id="93061"/>
    <lineage>
        <taxon>Bacteria</taxon>
        <taxon>Bacillati</taxon>
        <taxon>Bacillota</taxon>
        <taxon>Bacilli</taxon>
        <taxon>Bacillales</taxon>
        <taxon>Staphylococcaceae</taxon>
        <taxon>Staphylococcus</taxon>
    </lineage>
</organism>
<accession>Q2FUW3</accession>
<protein>
    <recommendedName>
        <fullName>Accessory Sec system protein Asp1</fullName>
    </recommendedName>
    <alternativeName>
        <fullName>Accessory secretory protein Asp1</fullName>
    </alternativeName>
</protein>
<reference key="1">
    <citation type="book" date="2006" name="Gram positive pathogens, 2nd edition">
        <title>The Staphylococcus aureus NCTC 8325 genome.</title>
        <editorList>
            <person name="Fischetti V."/>
            <person name="Novick R."/>
            <person name="Ferretti J."/>
            <person name="Portnoy D."/>
            <person name="Rood J."/>
        </editorList>
        <authorList>
            <person name="Gillaspy A.F."/>
            <person name="Worrell V."/>
            <person name="Orvis J."/>
            <person name="Roe B.A."/>
            <person name="Dyer D.W."/>
            <person name="Iandolo J.J."/>
        </authorList>
    </citation>
    <scope>NUCLEOTIDE SEQUENCE [LARGE SCALE GENOMIC DNA]</scope>
    <source>
        <strain>NCTC 8325 / PS 47</strain>
    </source>
</reference>
<reference key="2">
    <citation type="journal article" date="2008" name="J. Bacteriol.">
        <title>Characterization of the accessory Sec system of Staphylococcus aureus.</title>
        <authorList>
            <person name="Siboo I.R."/>
            <person name="Chaffin D.O."/>
            <person name="Rubens C.E."/>
            <person name="Sullam P.M."/>
        </authorList>
    </citation>
    <scope>FUNCTION</scope>
    <scope>DISRUPTION PHENOTYPE</scope>
    <source>
        <strain>ISP479C</strain>
    </source>
</reference>
<keyword id="KW-0653">Protein transport</keyword>
<keyword id="KW-1185">Reference proteome</keyword>
<keyword id="KW-0811">Translocation</keyword>
<keyword id="KW-0813">Transport</keyword>
<dbReference type="EMBL" id="CP000253">
    <property type="protein sequence ID" value="ABD31975.1"/>
    <property type="molecule type" value="Genomic_DNA"/>
</dbReference>
<dbReference type="RefSeq" id="WP_000873197.1">
    <property type="nucleotide sequence ID" value="NZ_LS483365.1"/>
</dbReference>
<dbReference type="RefSeq" id="YP_501437.1">
    <property type="nucleotide sequence ID" value="NC_007795.1"/>
</dbReference>
<dbReference type="SMR" id="Q2FUW3"/>
<dbReference type="STRING" id="93061.SAOUHSC_02988"/>
<dbReference type="PaxDb" id="1280-SAXN108_2923"/>
<dbReference type="GeneID" id="3921470"/>
<dbReference type="KEGG" id="sao:SAOUHSC_02988"/>
<dbReference type="PATRIC" id="fig|93061.5.peg.2695"/>
<dbReference type="eggNOG" id="ENOG502ZAK5">
    <property type="taxonomic scope" value="Bacteria"/>
</dbReference>
<dbReference type="HOGENOM" id="CLU_038827_1_0_9"/>
<dbReference type="OrthoDB" id="9767875at2"/>
<dbReference type="PRO" id="PR:Q2FUW3"/>
<dbReference type="Proteomes" id="UP000008816">
    <property type="component" value="Chromosome"/>
</dbReference>
<dbReference type="GO" id="GO:0015031">
    <property type="term" value="P:protein transport"/>
    <property type="evidence" value="ECO:0007669"/>
    <property type="project" value="UniProtKB-KW"/>
</dbReference>
<dbReference type="InterPro" id="IPR022372">
    <property type="entry name" value="Accessory_SS_Asp1"/>
</dbReference>
<dbReference type="NCBIfam" id="TIGR03713">
    <property type="entry name" value="acc_sec_asp1"/>
    <property type="match status" value="1"/>
</dbReference>
<dbReference type="Pfam" id="PF16993">
    <property type="entry name" value="Asp1"/>
    <property type="match status" value="1"/>
</dbReference>
<gene>
    <name type="primary">asp1</name>
    <name type="ordered locus">SAOUHSC_02988</name>
</gene>
<proteinExistence type="inferred from homology"/>
<comment type="function">
    <text evidence="1">Part of the accessory SecA2/SecY2 system specifically required to export SraP, a serine-rich repeat cell wall protein encoded upstream in the same operon.</text>
</comment>
<comment type="subunit">
    <text>Part of the accessory SecA2/SecY2 protein translocation apparatus required to export cell wall protein SraP.</text>
</comment>
<comment type="disruption phenotype">
    <text evidence="1">No effect on cell growth, significantly reduces export of the cell wall protein SraP. The small amount that is exported seems to be glycosylated normally.</text>
</comment>
<comment type="similarity">
    <text evidence="2">Belongs to the accessory Sec system protein Asp1 family.</text>
</comment>
<feature type="chain" id="PRO_0000414195" description="Accessory Sec system protein Asp1">
    <location>
        <begin position="1"/>
        <end position="517"/>
    </location>
</feature>
<evidence type="ECO:0000269" key="1">
    <source>
    </source>
</evidence>
<evidence type="ECO:0000305" key="2"/>